<protein>
    <recommendedName>
        <fullName evidence="8">Valine N-monooxygenase 1</fullName>
        <ecNumber evidence="5">1.14.14.38</ecNumber>
    </recommendedName>
    <alternativeName>
        <fullName evidence="8">Cytochrome P450 79D1</fullName>
    </alternativeName>
    <alternativeName>
        <fullName evidence="8">Isoleucine N-monooxygenase 1</fullName>
        <ecNumber evidence="5">1.14.14.39</ecNumber>
    </alternativeName>
</protein>
<gene>
    <name evidence="8" type="primary">CYP79D1</name>
</gene>
<keyword id="KW-0903">Direct protein sequencing</keyword>
<keyword id="KW-0256">Endoplasmic reticulum</keyword>
<keyword id="KW-0325">Glycoprotein</keyword>
<keyword id="KW-0349">Heme</keyword>
<keyword id="KW-0408">Iron</keyword>
<keyword id="KW-0472">Membrane</keyword>
<keyword id="KW-0479">Metal-binding</keyword>
<keyword id="KW-0492">Microsome</keyword>
<keyword id="KW-0503">Monooxygenase</keyword>
<keyword id="KW-0560">Oxidoreductase</keyword>
<keyword id="KW-0735">Signal-anchor</keyword>
<keyword id="KW-0812">Transmembrane</keyword>
<keyword id="KW-1133">Transmembrane helix</keyword>
<name>C79D1_MANES</name>
<proteinExistence type="evidence at protein level"/>
<accession>Q9M7B8</accession>
<accession>Q5MD53</accession>
<evidence type="ECO:0000250" key="1">
    <source>
        <dbReference type="UniProtKB" id="D5JBW8"/>
    </source>
</evidence>
<evidence type="ECO:0000250" key="2">
    <source>
        <dbReference type="UniProtKB" id="Q96242"/>
    </source>
</evidence>
<evidence type="ECO:0000255" key="3"/>
<evidence type="ECO:0000255" key="4">
    <source>
        <dbReference type="PROSITE-ProRule" id="PRU00498"/>
    </source>
</evidence>
<evidence type="ECO:0000269" key="5">
    <source>
    </source>
</evidence>
<evidence type="ECO:0000269" key="6">
    <source>
    </source>
</evidence>
<evidence type="ECO:0000269" key="7">
    <source>
    </source>
</evidence>
<evidence type="ECO:0000303" key="8">
    <source>
    </source>
</evidence>
<evidence type="ECO:0000305" key="9"/>
<evidence type="ECO:0000305" key="10">
    <source>
    </source>
</evidence>
<evidence type="ECO:0000305" key="11">
    <source>
    </source>
</evidence>
<comment type="function">
    <text evidence="5 6">Involved in the biosynthesis of the cyanogenic glucosides linamarin and lotaustralin. Can use L-valine or L-isoleucine as substrate, but not L-leucine, L-phenylalanine, L-tyrosine, D-valine or D-isoleucine (PubMed:10636899, PubMed:15630626). Catalyzes multi-step reactions starting with two successive N-hydroxylations using L-valine and L-isoleucine as substrates leading to the formation of N,N-dihydroxy-L-valine and N,N-dihydroxy-L-isoleucine, respectively; following spontaneous reactions lead to the production of (E)-2-methylpropanal oxime and (1E,2S)-2-methylbutanal oxime, respectively (PubMed:10636899).</text>
</comment>
<comment type="catalytic activity">
    <reaction evidence="5">
        <text>L-valine + 2 reduced [NADPH--hemoprotein reductase] + 2 O2 = (E)-2-methylpropanal oxime + 2 oxidized [NADPH--hemoprotein reductase] + CO2 + 3 H2O + 2 H(+)</text>
        <dbReference type="Rhea" id="RHEA:28606"/>
        <dbReference type="Rhea" id="RHEA-COMP:11964"/>
        <dbReference type="Rhea" id="RHEA-COMP:11965"/>
        <dbReference type="ChEBI" id="CHEBI:15377"/>
        <dbReference type="ChEBI" id="CHEBI:15378"/>
        <dbReference type="ChEBI" id="CHEBI:15379"/>
        <dbReference type="ChEBI" id="CHEBI:16526"/>
        <dbReference type="ChEBI" id="CHEBI:57618"/>
        <dbReference type="ChEBI" id="CHEBI:57762"/>
        <dbReference type="ChEBI" id="CHEBI:58210"/>
        <dbReference type="ChEBI" id="CHEBI:61143"/>
        <dbReference type="EC" id="1.14.14.38"/>
    </reaction>
</comment>
<comment type="catalytic activity">
    <reaction evidence="10">
        <text>L-valine + reduced [NADPH--hemoprotein reductase] + O2 = N-hydroxy-L-valine + oxidized [NADPH--hemoprotein reductase] + H2O + 2 H(+)</text>
        <dbReference type="Rhea" id="RHEA:30491"/>
        <dbReference type="Rhea" id="RHEA-COMP:11964"/>
        <dbReference type="Rhea" id="RHEA-COMP:11965"/>
        <dbReference type="ChEBI" id="CHEBI:15377"/>
        <dbReference type="ChEBI" id="CHEBI:15378"/>
        <dbReference type="ChEBI" id="CHEBI:15379"/>
        <dbReference type="ChEBI" id="CHEBI:57618"/>
        <dbReference type="ChEBI" id="CHEBI:57762"/>
        <dbReference type="ChEBI" id="CHEBI:58210"/>
        <dbReference type="ChEBI" id="CHEBI:61140"/>
    </reaction>
</comment>
<comment type="catalytic activity">
    <reaction evidence="10">
        <text>N-hydroxy-L-valine + reduced [NADPH--hemoprotein reductase] + O2 = N,N-dihydroxy-L-valine + oxidized [NADPH--hemoprotein reductase] + H2O + H(+)</text>
        <dbReference type="Rhea" id="RHEA:30495"/>
        <dbReference type="Rhea" id="RHEA-COMP:11964"/>
        <dbReference type="Rhea" id="RHEA-COMP:11965"/>
        <dbReference type="ChEBI" id="CHEBI:15377"/>
        <dbReference type="ChEBI" id="CHEBI:15378"/>
        <dbReference type="ChEBI" id="CHEBI:15379"/>
        <dbReference type="ChEBI" id="CHEBI:57618"/>
        <dbReference type="ChEBI" id="CHEBI:58210"/>
        <dbReference type="ChEBI" id="CHEBI:61140"/>
        <dbReference type="ChEBI" id="CHEBI:61142"/>
    </reaction>
</comment>
<comment type="catalytic activity">
    <reaction evidence="5">
        <text>L-isoleucine + 2 reduced [NADPH--hemoprotein reductase] + 2 O2 = (1E,2S)-2-methylbutanal oxime + 2 oxidized [NADPH--hemoprotein reductase] + CO2 + 3 H2O + 2 H(+)</text>
        <dbReference type="Rhea" id="RHEA:28602"/>
        <dbReference type="Rhea" id="RHEA-COMP:11964"/>
        <dbReference type="Rhea" id="RHEA-COMP:11965"/>
        <dbReference type="ChEBI" id="CHEBI:15377"/>
        <dbReference type="ChEBI" id="CHEBI:15378"/>
        <dbReference type="ChEBI" id="CHEBI:15379"/>
        <dbReference type="ChEBI" id="CHEBI:16526"/>
        <dbReference type="ChEBI" id="CHEBI:57618"/>
        <dbReference type="ChEBI" id="CHEBI:58045"/>
        <dbReference type="ChEBI" id="CHEBI:58210"/>
        <dbReference type="ChEBI" id="CHEBI:134628"/>
        <dbReference type="EC" id="1.14.14.39"/>
    </reaction>
</comment>
<comment type="catalytic activity">
    <reaction evidence="10">
        <text>L-isoleucine + reduced [NADPH--hemoprotein reductase] + O2 = N-hydroxy-L-isoleucine + oxidized [NADPH--hemoprotein reductase] + H2O + 2 H(+)</text>
        <dbReference type="Rhea" id="RHEA:30479"/>
        <dbReference type="Rhea" id="RHEA-COMP:11964"/>
        <dbReference type="Rhea" id="RHEA-COMP:11965"/>
        <dbReference type="ChEBI" id="CHEBI:15377"/>
        <dbReference type="ChEBI" id="CHEBI:15378"/>
        <dbReference type="ChEBI" id="CHEBI:15379"/>
        <dbReference type="ChEBI" id="CHEBI:57618"/>
        <dbReference type="ChEBI" id="CHEBI:58045"/>
        <dbReference type="ChEBI" id="CHEBI:58210"/>
        <dbReference type="ChEBI" id="CHEBI:61131"/>
    </reaction>
</comment>
<comment type="catalytic activity">
    <reaction evidence="10">
        <text>N-hydroxy-L-isoleucine + reduced [NADPH--hemoprotein reductase] + O2 = N,N-dihydroxy-L-isoleucine + oxidized [NADPH--hemoprotein reductase] + H2O + H(+)</text>
        <dbReference type="Rhea" id="RHEA:30483"/>
        <dbReference type="Rhea" id="RHEA-COMP:11964"/>
        <dbReference type="Rhea" id="RHEA-COMP:11965"/>
        <dbReference type="ChEBI" id="CHEBI:15377"/>
        <dbReference type="ChEBI" id="CHEBI:15378"/>
        <dbReference type="ChEBI" id="CHEBI:15379"/>
        <dbReference type="ChEBI" id="CHEBI:57618"/>
        <dbReference type="ChEBI" id="CHEBI:58210"/>
        <dbReference type="ChEBI" id="CHEBI:61131"/>
        <dbReference type="ChEBI" id="CHEBI:61133"/>
    </reaction>
</comment>
<comment type="cofactor">
    <cofactor evidence="2">
        <name>heme</name>
        <dbReference type="ChEBI" id="CHEBI:30413"/>
    </cofactor>
</comment>
<comment type="activity regulation">
    <text evidence="5">Inhibited by tetcyclasis but not by 1-aminobenzotriazole (ABT).</text>
</comment>
<comment type="biophysicochemical properties">
    <kinetics>
        <KM evidence="5">1.2 mM for valine</KM>
        <KM evidence="5">1.3 mM for isoleucine</KM>
        <text evidence="5">kcat is 2.3 min(-1) with isoleucine as substrate (PubMed:10636899). kcat is 4.3 min(-1) with valine as substrate (PubMed:10636899).</text>
    </kinetics>
</comment>
<comment type="pathway">
    <text evidence="5">Secondary metabolite biosynthesis.</text>
</comment>
<comment type="subcellular location">
    <subcellularLocation>
        <location evidence="1">Microsome membrane</location>
        <topology evidence="3">Single-pass type II membrane protein</topology>
    </subcellularLocation>
</comment>
<comment type="tissue specificity">
    <text evidence="7">Expressed in the epidermis, the next two cortex cell layers, the endodermis and the pericycle of leaf petioles. Strong expression around the laticifers among the phloem cells and in parenchymatic cells between the protoxylem and the metaxylem cells. In the leaves, preferentially expressed in the mesophyll cells adjacent to the epidermis.</text>
</comment>
<comment type="miscellaneous">
    <text evidence="11">The synthesis of cyanogenic glucosides is mainly in the top of the plant and then cyanogenic glucosides are transported basipetal in the plant to the tuber.</text>
</comment>
<comment type="similarity">
    <text evidence="9">Belongs to the cytochrome P450 family.</text>
</comment>
<reference key="1">
    <citation type="journal article" date="2000" name="J. Biol. Chem.">
        <title>Cytochromes P-450 from cassava (Manihot esculenta Crantz) catalyzing the first steps in the biosynthesis of the cyanogenic glucosides linamarin and lotaustralin. Cloning, functional expression in Pichia pastoris, and substrate specificity of the isolated recombinant enzymes.</title>
        <authorList>
            <person name="Andersen M.D."/>
            <person name="Busk P.K."/>
            <person name="Svendsen I."/>
            <person name="Moller B.L."/>
        </authorList>
    </citation>
    <scope>NUCLEOTIDE SEQUENCE [MRNA]</scope>
    <scope>PROTEIN SEQUENCE OF 2-16</scope>
    <scope>FUNCTION</scope>
    <scope>CATALYTIC ACTIVITY</scope>
    <scope>SUBCELLULAR LOCATION</scope>
    <scope>BIOPHYSICOCHEMICAL PROPERTIES</scope>
    <scope>ACTIVITY REGULATION</scope>
    <scope>PATHWAY</scope>
</reference>
<reference key="2">
    <citation type="journal article" date="2005" name="Plant Physiol.">
        <title>Cassava plants with a depleted cyanogenic glucoside content in leaves and tubers. Distribution of cyanogenic glucosides, their site of synthesis and transport, and blockage of the biosynthesis by RNA interference technology.</title>
        <authorList>
            <person name="Jorgensen K."/>
            <person name="Bak S."/>
            <person name="Busk P.K."/>
            <person name="Sorensen C."/>
            <person name="Olsen C.E."/>
            <person name="Puonti-Kaerlas J."/>
            <person name="Moller B.L."/>
        </authorList>
    </citation>
    <scope>NUCLEOTIDE SEQUENCE [MRNA]</scope>
    <scope>TISSUE SPECIFICITY</scope>
</reference>
<reference key="3">
    <citation type="journal article" date="2004" name="Plant Mol. Biol.">
        <title>Engineering cyanogen synthesis and turnover in cassava (Manihot esculenta).</title>
        <authorList>
            <person name="Siritunga D."/>
            <person name="Sayre R."/>
        </authorList>
    </citation>
    <scope>FUNCTION</scope>
</reference>
<dbReference type="EC" id="1.14.14.38" evidence="5"/>
<dbReference type="EC" id="1.14.14.39" evidence="5"/>
<dbReference type="EMBL" id="AF140613">
    <property type="protein sequence ID" value="AAF27289.1"/>
    <property type="molecule type" value="mRNA"/>
</dbReference>
<dbReference type="EMBL" id="AY834391">
    <property type="protein sequence ID" value="AAV97889.1"/>
    <property type="molecule type" value="mRNA"/>
</dbReference>
<dbReference type="SMR" id="Q9M7B8"/>
<dbReference type="EnsemblPlants" id="Manes.13G094200.1.v8.1">
    <property type="protein sequence ID" value="Manes.13G094200.1.v8.1.CDS"/>
    <property type="gene ID" value="Manes.13G094200.v8.1"/>
</dbReference>
<dbReference type="Gramene" id="Manes.13G094200.1.v8.1">
    <property type="protein sequence ID" value="Manes.13G094200.1.v8.1.CDS"/>
    <property type="gene ID" value="Manes.13G094200.v8.1"/>
</dbReference>
<dbReference type="KEGG" id="ag:AAF27289"/>
<dbReference type="KEGG" id="ag:AAV97889"/>
<dbReference type="OMA" id="THLYPLM"/>
<dbReference type="OrthoDB" id="2789670at2759"/>
<dbReference type="BRENDA" id="1.14.14.38">
    <property type="organism ID" value="3175"/>
</dbReference>
<dbReference type="BRENDA" id="1.14.14.39">
    <property type="organism ID" value="3175"/>
</dbReference>
<dbReference type="SABIO-RK" id="Q9M7B8"/>
<dbReference type="GO" id="GO:0005783">
    <property type="term" value="C:endoplasmic reticulum"/>
    <property type="evidence" value="ECO:0007669"/>
    <property type="project" value="UniProtKB-KW"/>
</dbReference>
<dbReference type="GO" id="GO:0016020">
    <property type="term" value="C:membrane"/>
    <property type="evidence" value="ECO:0007669"/>
    <property type="project" value="UniProtKB-KW"/>
</dbReference>
<dbReference type="GO" id="GO:0020037">
    <property type="term" value="F:heme binding"/>
    <property type="evidence" value="ECO:0007669"/>
    <property type="project" value="InterPro"/>
</dbReference>
<dbReference type="GO" id="GO:0005506">
    <property type="term" value="F:iron ion binding"/>
    <property type="evidence" value="ECO:0007669"/>
    <property type="project" value="InterPro"/>
</dbReference>
<dbReference type="GO" id="GO:0102001">
    <property type="term" value="F:isoleucine N-monooxygenase (oxime forming) activity"/>
    <property type="evidence" value="ECO:0007669"/>
    <property type="project" value="RHEA"/>
</dbReference>
<dbReference type="GO" id="GO:0004497">
    <property type="term" value="F:monooxygenase activity"/>
    <property type="evidence" value="ECO:0000314"/>
    <property type="project" value="UniProtKB"/>
</dbReference>
<dbReference type="GO" id="GO:0102002">
    <property type="term" value="F:valine N-monooxygenase (oxime forming) activity"/>
    <property type="evidence" value="ECO:0007669"/>
    <property type="project" value="UniProtKB-EC"/>
</dbReference>
<dbReference type="GO" id="GO:0019756">
    <property type="term" value="P:cyanogenic glycoside biosynthetic process"/>
    <property type="evidence" value="ECO:0000314"/>
    <property type="project" value="UniProtKB"/>
</dbReference>
<dbReference type="CDD" id="cd20658">
    <property type="entry name" value="CYP79"/>
    <property type="match status" value="1"/>
</dbReference>
<dbReference type="FunFam" id="1.10.630.10:FF:000037">
    <property type="entry name" value="Cytochrome P450 9"/>
    <property type="match status" value="1"/>
</dbReference>
<dbReference type="Gene3D" id="1.10.630.10">
    <property type="entry name" value="Cytochrome P450"/>
    <property type="match status" value="1"/>
</dbReference>
<dbReference type="InterPro" id="IPR001128">
    <property type="entry name" value="Cyt_P450"/>
</dbReference>
<dbReference type="InterPro" id="IPR017972">
    <property type="entry name" value="Cyt_P450_CS"/>
</dbReference>
<dbReference type="InterPro" id="IPR002401">
    <property type="entry name" value="Cyt_P450_E_grp-I"/>
</dbReference>
<dbReference type="InterPro" id="IPR036396">
    <property type="entry name" value="Cyt_P450_sf"/>
</dbReference>
<dbReference type="PANTHER" id="PTHR47944">
    <property type="entry name" value="CYTOCHROME P450 98A9"/>
    <property type="match status" value="1"/>
</dbReference>
<dbReference type="PANTHER" id="PTHR47944:SF4">
    <property type="entry name" value="OS09G0441700 PROTEIN"/>
    <property type="match status" value="1"/>
</dbReference>
<dbReference type="Pfam" id="PF00067">
    <property type="entry name" value="p450"/>
    <property type="match status" value="1"/>
</dbReference>
<dbReference type="PRINTS" id="PR00463">
    <property type="entry name" value="EP450I"/>
</dbReference>
<dbReference type="SUPFAM" id="SSF48264">
    <property type="entry name" value="Cytochrome P450"/>
    <property type="match status" value="1"/>
</dbReference>
<dbReference type="PROSITE" id="PS00086">
    <property type="entry name" value="CYTOCHROME_P450"/>
    <property type="match status" value="1"/>
</dbReference>
<sequence length="542" mass="61244">MAMNVSTTIGLLNATSFASSSSINTVKILFVTLFISIVSTIVKLQKSAANKEGSKKLPLPPGPTPWPLIGNIPEMIRYRPTFRWIHQLMKDMNTDICLIRFGRTNFVPISCPVLAREILKKNDAIFSNRPKTLSAKSMSGGYLTTIVVPYNDQWKKMRKILTSEIISPARHKWLHDKRAEEADNLVFYIHNQFKANKNVNLRTATRHYGGNVIRKMVFSKRYFGKGMPDGGPGPEEIEHIDAVFTALKYLYGFCISDFLPFLLGLDLDGQEKFVLDANKTIRDYQNPLIDERIQQWKSGERKEMEDLLDVFITLKDSDGNPLLTPDEIKNQIAEIMIATVDNPSNAIEWAMGEMLNQPEILKKATEELDRVVGKDRLVQESDIPNLDYVKACAREAFRLHPVAHFNVPHVAMEDTVIGDYFIPKGSWAVLSRYGLGRNPKTWSDPLKYDPERHMNEGEVVLTEHELRFVTFSTGRRGCVASLLGSCMTTMLLARMLQCFTWTPPANVSKIDLAETLDELTPATPISAFAKPRLAPHLYPTSP</sequence>
<feature type="chain" id="PRO_0000407322" description="Valine N-monooxygenase 1">
    <location>
        <begin position="1"/>
        <end position="542"/>
    </location>
</feature>
<feature type="topological domain" description="Cytoplasmic" evidence="9">
    <location>
        <begin position="1"/>
        <end position="21"/>
    </location>
</feature>
<feature type="transmembrane region" description="Helical; Signal-anchor for type II membrane protein" evidence="3">
    <location>
        <begin position="22"/>
        <end position="42"/>
    </location>
</feature>
<feature type="topological domain" description="Lumenal" evidence="9">
    <location>
        <begin position="43"/>
        <end position="542"/>
    </location>
</feature>
<feature type="binding site" description="axial binding residue" evidence="2">
    <location>
        <position position="478"/>
    </location>
    <ligand>
        <name>heme</name>
        <dbReference type="ChEBI" id="CHEBI:30413"/>
    </ligand>
    <ligandPart>
        <name>Fe</name>
        <dbReference type="ChEBI" id="CHEBI:18248"/>
    </ligandPart>
</feature>
<feature type="glycosylation site" description="N-linked (GlcNAc...) asparagine" evidence="4">
    <location>
        <position position="278"/>
    </location>
</feature>
<feature type="glycosylation site" description="N-linked (GlcNAc...) asparagine" evidence="4">
    <location>
        <position position="506"/>
    </location>
</feature>
<feature type="sequence conflict" description="In Ref. 2; AAV97889." evidence="9" ref="2">
    <original>F</original>
    <variation>C</variation>
    <location>
        <position position="30"/>
    </location>
</feature>
<feature type="sequence conflict" description="In Ref. 2; AAV97889." evidence="9" ref="2">
    <original>N</original>
    <variation>T</variation>
    <location>
        <position position="286"/>
    </location>
</feature>
<feature type="sequence conflict" description="In Ref. 2; AAV97889." evidence="9" ref="2">
    <original>P</original>
    <variation>T</variation>
    <location>
        <position position="439"/>
    </location>
</feature>
<organism>
    <name type="scientific">Manihot esculenta</name>
    <name type="common">Cassava</name>
    <name type="synonym">Jatropha manihot</name>
    <dbReference type="NCBI Taxonomy" id="3983"/>
    <lineage>
        <taxon>Eukaryota</taxon>
        <taxon>Viridiplantae</taxon>
        <taxon>Streptophyta</taxon>
        <taxon>Embryophyta</taxon>
        <taxon>Tracheophyta</taxon>
        <taxon>Spermatophyta</taxon>
        <taxon>Magnoliopsida</taxon>
        <taxon>eudicotyledons</taxon>
        <taxon>Gunneridae</taxon>
        <taxon>Pentapetalae</taxon>
        <taxon>rosids</taxon>
        <taxon>fabids</taxon>
        <taxon>Malpighiales</taxon>
        <taxon>Euphorbiaceae</taxon>
        <taxon>Crotonoideae</taxon>
        <taxon>Manihoteae</taxon>
        <taxon>Manihot</taxon>
    </lineage>
</organism>